<keyword id="KW-0687">Ribonucleoprotein</keyword>
<keyword id="KW-0689">Ribosomal protein</keyword>
<reference key="1">
    <citation type="submission" date="2008-10" db="EMBL/GenBank/DDBJ databases">
        <title>Genome sequence of Ureaplasma urealyticum serovar 10 ATCC-33699.</title>
        <authorList>
            <person name="Shrivastava S."/>
            <person name="Methe B.A."/>
            <person name="Glass J."/>
            <person name="White K."/>
            <person name="Duffy L.B."/>
        </authorList>
    </citation>
    <scope>NUCLEOTIDE SEQUENCE [LARGE SCALE GENOMIC DNA]</scope>
    <source>
        <strain>ATCC 33699 / Western</strain>
    </source>
</reference>
<evidence type="ECO:0000255" key="1">
    <source>
        <dbReference type="HAMAP-Rule" id="MF_00402"/>
    </source>
</evidence>
<evidence type="ECO:0000305" key="2"/>
<name>RL19_UREU1</name>
<sequence length="123" mass="13983">MALFKINKGEIMNFVNSTQLKTDIPSFDSGDTIIVHNRIVEGKKTRIQKFEGVVLRRRGSGSSETVIVRKESNGVGVEQSFNIHSPLVEKIEVIKYGKVRRAYISYMRNRSGKSARIKELNKQ</sequence>
<protein>
    <recommendedName>
        <fullName evidence="1">Large ribosomal subunit protein bL19</fullName>
    </recommendedName>
    <alternativeName>
        <fullName evidence="2">50S ribosomal protein L19</fullName>
    </alternativeName>
</protein>
<accession>B5ZC77</accession>
<gene>
    <name evidence="1" type="primary">rplS</name>
    <name type="ordered locus">UUR10_0663</name>
</gene>
<feature type="chain" id="PRO_1000193915" description="Large ribosomal subunit protein bL19">
    <location>
        <begin position="1"/>
        <end position="123"/>
    </location>
</feature>
<proteinExistence type="inferred from homology"/>
<organism>
    <name type="scientific">Ureaplasma urealyticum serovar 10 (strain ATCC 33699 / Western)</name>
    <dbReference type="NCBI Taxonomy" id="565575"/>
    <lineage>
        <taxon>Bacteria</taxon>
        <taxon>Bacillati</taxon>
        <taxon>Mycoplasmatota</taxon>
        <taxon>Mycoplasmoidales</taxon>
        <taxon>Mycoplasmoidaceae</taxon>
        <taxon>Ureaplasma</taxon>
    </lineage>
</organism>
<comment type="function">
    <text evidence="1">This protein is located at the 30S-50S ribosomal subunit interface and may play a role in the structure and function of the aminoacyl-tRNA binding site.</text>
</comment>
<comment type="similarity">
    <text evidence="1">Belongs to the bacterial ribosomal protein bL19 family.</text>
</comment>
<dbReference type="EMBL" id="CP001184">
    <property type="protein sequence ID" value="ACI60217.1"/>
    <property type="molecule type" value="Genomic_DNA"/>
</dbReference>
<dbReference type="RefSeq" id="WP_004026076.1">
    <property type="nucleotide sequence ID" value="NC_011374.1"/>
</dbReference>
<dbReference type="SMR" id="B5ZC77"/>
<dbReference type="STRING" id="565575.UUR10_0663"/>
<dbReference type="GeneID" id="93849115"/>
<dbReference type="KEGG" id="uue:UUR10_0663"/>
<dbReference type="eggNOG" id="COG0335">
    <property type="taxonomic scope" value="Bacteria"/>
</dbReference>
<dbReference type="HOGENOM" id="CLU_103507_2_2_14"/>
<dbReference type="OrthoDB" id="9803541at2"/>
<dbReference type="Proteomes" id="UP000002018">
    <property type="component" value="Chromosome"/>
</dbReference>
<dbReference type="GO" id="GO:0022625">
    <property type="term" value="C:cytosolic large ribosomal subunit"/>
    <property type="evidence" value="ECO:0007669"/>
    <property type="project" value="TreeGrafter"/>
</dbReference>
<dbReference type="GO" id="GO:0003735">
    <property type="term" value="F:structural constituent of ribosome"/>
    <property type="evidence" value="ECO:0007669"/>
    <property type="project" value="InterPro"/>
</dbReference>
<dbReference type="GO" id="GO:0006412">
    <property type="term" value="P:translation"/>
    <property type="evidence" value="ECO:0007669"/>
    <property type="project" value="UniProtKB-UniRule"/>
</dbReference>
<dbReference type="Gene3D" id="2.30.30.790">
    <property type="match status" value="1"/>
</dbReference>
<dbReference type="HAMAP" id="MF_00402">
    <property type="entry name" value="Ribosomal_bL19"/>
    <property type="match status" value="1"/>
</dbReference>
<dbReference type="InterPro" id="IPR001857">
    <property type="entry name" value="Ribosomal_bL19"/>
</dbReference>
<dbReference type="InterPro" id="IPR018257">
    <property type="entry name" value="Ribosomal_bL19_CS"/>
</dbReference>
<dbReference type="InterPro" id="IPR038657">
    <property type="entry name" value="Ribosomal_bL19_sf"/>
</dbReference>
<dbReference type="InterPro" id="IPR008991">
    <property type="entry name" value="Translation_prot_SH3-like_sf"/>
</dbReference>
<dbReference type="NCBIfam" id="TIGR01024">
    <property type="entry name" value="rplS_bact"/>
    <property type="match status" value="1"/>
</dbReference>
<dbReference type="PANTHER" id="PTHR15680:SF9">
    <property type="entry name" value="LARGE RIBOSOMAL SUBUNIT PROTEIN BL19M"/>
    <property type="match status" value="1"/>
</dbReference>
<dbReference type="PANTHER" id="PTHR15680">
    <property type="entry name" value="RIBOSOMAL PROTEIN L19"/>
    <property type="match status" value="1"/>
</dbReference>
<dbReference type="Pfam" id="PF01245">
    <property type="entry name" value="Ribosomal_L19"/>
    <property type="match status" value="1"/>
</dbReference>
<dbReference type="PIRSF" id="PIRSF002191">
    <property type="entry name" value="Ribosomal_L19"/>
    <property type="match status" value="1"/>
</dbReference>
<dbReference type="PRINTS" id="PR00061">
    <property type="entry name" value="RIBOSOMALL19"/>
</dbReference>
<dbReference type="SUPFAM" id="SSF50104">
    <property type="entry name" value="Translation proteins SH3-like domain"/>
    <property type="match status" value="1"/>
</dbReference>
<dbReference type="PROSITE" id="PS01015">
    <property type="entry name" value="RIBOSOMAL_L19"/>
    <property type="match status" value="1"/>
</dbReference>